<evidence type="ECO:0000250" key="1"/>
<evidence type="ECO:0000255" key="2"/>
<evidence type="ECO:0000255" key="3">
    <source>
        <dbReference type="PROSITE-ProRule" id="PRU00712"/>
    </source>
</evidence>
<evidence type="ECO:0000255" key="4">
    <source>
        <dbReference type="PROSITE-ProRule" id="PRU00714"/>
    </source>
</evidence>
<evidence type="ECO:0000256" key="5">
    <source>
        <dbReference type="SAM" id="MobiDB-lite"/>
    </source>
</evidence>
<evidence type="ECO:0000305" key="6"/>
<name>SYG1_SCHPO</name>
<protein>
    <recommendedName>
        <fullName>Protein SYG1 homolog</fullName>
    </recommendedName>
</protein>
<accession>Q9UU86</accession>
<accession>O74979</accession>
<organism>
    <name type="scientific">Schizosaccharomyces pombe (strain 972 / ATCC 24843)</name>
    <name type="common">Fission yeast</name>
    <dbReference type="NCBI Taxonomy" id="284812"/>
    <lineage>
        <taxon>Eukaryota</taxon>
        <taxon>Fungi</taxon>
        <taxon>Dikarya</taxon>
        <taxon>Ascomycota</taxon>
        <taxon>Taphrinomycotina</taxon>
        <taxon>Schizosaccharomycetes</taxon>
        <taxon>Schizosaccharomycetales</taxon>
        <taxon>Schizosaccharomycetaceae</taxon>
        <taxon>Schizosaccharomyces</taxon>
    </lineage>
</organism>
<dbReference type="EMBL" id="CU329672">
    <property type="protein sequence ID" value="CAA19315.2"/>
    <property type="molecule type" value="Genomic_DNA"/>
</dbReference>
<dbReference type="PIR" id="T41168">
    <property type="entry name" value="T41168"/>
</dbReference>
<dbReference type="PIR" id="T41680">
    <property type="entry name" value="T41680"/>
</dbReference>
<dbReference type="RefSeq" id="NP_588554.2">
    <property type="nucleotide sequence ID" value="NM_001023540.3"/>
</dbReference>
<dbReference type="SMR" id="Q9UU86"/>
<dbReference type="BioGRID" id="280230">
    <property type="interactions" value="1"/>
</dbReference>
<dbReference type="FunCoup" id="Q9UU86">
    <property type="interactions" value="261"/>
</dbReference>
<dbReference type="STRING" id="284812.Q9UU86"/>
<dbReference type="iPTMnet" id="Q9UU86"/>
<dbReference type="PaxDb" id="4896-SPCC1827.07c.1"/>
<dbReference type="EnsemblFungi" id="SPCC1827.07c.1">
    <property type="protein sequence ID" value="SPCC1827.07c.1:pep"/>
    <property type="gene ID" value="SPCC1827.07c"/>
</dbReference>
<dbReference type="GeneID" id="3361154"/>
<dbReference type="KEGG" id="spo:3361154"/>
<dbReference type="PomBase" id="SPCC1827.07c"/>
<dbReference type="VEuPathDB" id="FungiDB:SPCC1827.07c"/>
<dbReference type="eggNOG" id="KOG1162">
    <property type="taxonomic scope" value="Eukaryota"/>
</dbReference>
<dbReference type="HOGENOM" id="CLU_006116_1_2_1"/>
<dbReference type="InParanoid" id="Q9UU86"/>
<dbReference type="OMA" id="FMQLYGV"/>
<dbReference type="PhylomeDB" id="Q9UU86"/>
<dbReference type="PRO" id="PR:Q9UU86"/>
<dbReference type="Proteomes" id="UP000002485">
    <property type="component" value="Chromosome III"/>
</dbReference>
<dbReference type="GO" id="GO:0005886">
    <property type="term" value="C:plasma membrane"/>
    <property type="evidence" value="ECO:0000269"/>
    <property type="project" value="PomBase"/>
</dbReference>
<dbReference type="GO" id="GO:0000822">
    <property type="term" value="F:inositol hexakisphosphate binding"/>
    <property type="evidence" value="ECO:0000318"/>
    <property type="project" value="GO_Central"/>
</dbReference>
<dbReference type="GO" id="GO:0005315">
    <property type="term" value="F:phosphate transmembrane transporter activity"/>
    <property type="evidence" value="ECO:0000314"/>
    <property type="project" value="PomBase"/>
</dbReference>
<dbReference type="GO" id="GO:0016036">
    <property type="term" value="P:cellular response to phosphate starvation"/>
    <property type="evidence" value="ECO:0000318"/>
    <property type="project" value="GO_Central"/>
</dbReference>
<dbReference type="GO" id="GO:0180029">
    <property type="term" value="P:phosphate ion export across plasma membrane"/>
    <property type="evidence" value="ECO:0000314"/>
    <property type="project" value="PomBase"/>
</dbReference>
<dbReference type="GO" id="GO:0006817">
    <property type="term" value="P:phosphate ion transport"/>
    <property type="evidence" value="ECO:0000318"/>
    <property type="project" value="GO_Central"/>
</dbReference>
<dbReference type="CDD" id="cd14475">
    <property type="entry name" value="SPX_SYG1_like"/>
    <property type="match status" value="1"/>
</dbReference>
<dbReference type="InterPro" id="IPR004342">
    <property type="entry name" value="EXS_C"/>
</dbReference>
<dbReference type="InterPro" id="IPR004331">
    <property type="entry name" value="SPX_dom"/>
</dbReference>
<dbReference type="PANTHER" id="PTHR10783:SF103">
    <property type="entry name" value="SOLUTE CARRIER FAMILY 53 MEMBER 1"/>
    <property type="match status" value="1"/>
</dbReference>
<dbReference type="PANTHER" id="PTHR10783">
    <property type="entry name" value="XENOTROPIC AND POLYTROPIC RETROVIRUS RECEPTOR 1-RELATED"/>
    <property type="match status" value="1"/>
</dbReference>
<dbReference type="Pfam" id="PF03124">
    <property type="entry name" value="EXS"/>
    <property type="match status" value="1"/>
</dbReference>
<dbReference type="Pfam" id="PF03105">
    <property type="entry name" value="SPX"/>
    <property type="match status" value="2"/>
</dbReference>
<dbReference type="PROSITE" id="PS51380">
    <property type="entry name" value="EXS"/>
    <property type="match status" value="1"/>
</dbReference>
<dbReference type="PROSITE" id="PS51382">
    <property type="entry name" value="SPX"/>
    <property type="match status" value="1"/>
</dbReference>
<proteinExistence type="inferred from homology"/>
<keyword id="KW-1003">Cell membrane</keyword>
<keyword id="KW-0472">Membrane</keyword>
<keyword id="KW-1185">Reference proteome</keyword>
<keyword id="KW-0812">Transmembrane</keyword>
<keyword id="KW-1133">Transmembrane helix</keyword>
<reference key="1">
    <citation type="journal article" date="2002" name="Nature">
        <title>The genome sequence of Schizosaccharomyces pombe.</title>
        <authorList>
            <person name="Wood V."/>
            <person name="Gwilliam R."/>
            <person name="Rajandream M.A."/>
            <person name="Lyne M.H."/>
            <person name="Lyne R."/>
            <person name="Stewart A."/>
            <person name="Sgouros J.G."/>
            <person name="Peat N."/>
            <person name="Hayles J."/>
            <person name="Baker S.G."/>
            <person name="Basham D."/>
            <person name="Bowman S."/>
            <person name="Brooks K."/>
            <person name="Brown D."/>
            <person name="Brown S."/>
            <person name="Chillingworth T."/>
            <person name="Churcher C.M."/>
            <person name="Collins M."/>
            <person name="Connor R."/>
            <person name="Cronin A."/>
            <person name="Davis P."/>
            <person name="Feltwell T."/>
            <person name="Fraser A."/>
            <person name="Gentles S."/>
            <person name="Goble A."/>
            <person name="Hamlin N."/>
            <person name="Harris D.E."/>
            <person name="Hidalgo J."/>
            <person name="Hodgson G."/>
            <person name="Holroyd S."/>
            <person name="Hornsby T."/>
            <person name="Howarth S."/>
            <person name="Huckle E.J."/>
            <person name="Hunt S."/>
            <person name="Jagels K."/>
            <person name="James K.D."/>
            <person name="Jones L."/>
            <person name="Jones M."/>
            <person name="Leather S."/>
            <person name="McDonald S."/>
            <person name="McLean J."/>
            <person name="Mooney P."/>
            <person name="Moule S."/>
            <person name="Mungall K.L."/>
            <person name="Murphy L.D."/>
            <person name="Niblett D."/>
            <person name="Odell C."/>
            <person name="Oliver K."/>
            <person name="O'Neil S."/>
            <person name="Pearson D."/>
            <person name="Quail M.A."/>
            <person name="Rabbinowitsch E."/>
            <person name="Rutherford K.M."/>
            <person name="Rutter S."/>
            <person name="Saunders D."/>
            <person name="Seeger K."/>
            <person name="Sharp S."/>
            <person name="Skelton J."/>
            <person name="Simmonds M.N."/>
            <person name="Squares R."/>
            <person name="Squares S."/>
            <person name="Stevens K."/>
            <person name="Taylor K."/>
            <person name="Taylor R.G."/>
            <person name="Tivey A."/>
            <person name="Walsh S.V."/>
            <person name="Warren T."/>
            <person name="Whitehead S."/>
            <person name="Woodward J.R."/>
            <person name="Volckaert G."/>
            <person name="Aert R."/>
            <person name="Robben J."/>
            <person name="Grymonprez B."/>
            <person name="Weltjens I."/>
            <person name="Vanstreels E."/>
            <person name="Rieger M."/>
            <person name="Schaefer M."/>
            <person name="Mueller-Auer S."/>
            <person name="Gabel C."/>
            <person name="Fuchs M."/>
            <person name="Duesterhoeft A."/>
            <person name="Fritzc C."/>
            <person name="Holzer E."/>
            <person name="Moestl D."/>
            <person name="Hilbert H."/>
            <person name="Borzym K."/>
            <person name="Langer I."/>
            <person name="Beck A."/>
            <person name="Lehrach H."/>
            <person name="Reinhardt R."/>
            <person name="Pohl T.M."/>
            <person name="Eger P."/>
            <person name="Zimmermann W."/>
            <person name="Wedler H."/>
            <person name="Wambutt R."/>
            <person name="Purnelle B."/>
            <person name="Goffeau A."/>
            <person name="Cadieu E."/>
            <person name="Dreano S."/>
            <person name="Gloux S."/>
            <person name="Lelaure V."/>
            <person name="Mottier S."/>
            <person name="Galibert F."/>
            <person name="Aves S.J."/>
            <person name="Xiang Z."/>
            <person name="Hunt C."/>
            <person name="Moore K."/>
            <person name="Hurst S.M."/>
            <person name="Lucas M."/>
            <person name="Rochet M."/>
            <person name="Gaillardin C."/>
            <person name="Tallada V.A."/>
            <person name="Garzon A."/>
            <person name="Thode G."/>
            <person name="Daga R.R."/>
            <person name="Cruzado L."/>
            <person name="Jimenez J."/>
            <person name="Sanchez M."/>
            <person name="del Rey F."/>
            <person name="Benito J."/>
            <person name="Dominguez A."/>
            <person name="Revuelta J.L."/>
            <person name="Moreno S."/>
            <person name="Armstrong J."/>
            <person name="Forsburg S.L."/>
            <person name="Cerutti L."/>
            <person name="Lowe T."/>
            <person name="McCombie W.R."/>
            <person name="Paulsen I."/>
            <person name="Potashkin J."/>
            <person name="Shpakovski G.V."/>
            <person name="Ussery D."/>
            <person name="Barrell B.G."/>
            <person name="Nurse P."/>
        </authorList>
    </citation>
    <scope>NUCLEOTIDE SEQUENCE [LARGE SCALE GENOMIC DNA]</scope>
    <source>
        <strain>972 / ATCC 24843</strain>
    </source>
</reference>
<comment type="function">
    <text evidence="1">May function in G-protein coupled signal transduction.</text>
</comment>
<comment type="subcellular location">
    <subcellularLocation>
        <location evidence="1">Cell membrane</location>
        <topology evidence="1">Multi-pass membrane protein</topology>
    </subcellularLocation>
</comment>
<comment type="similarity">
    <text evidence="6">Belongs to the SYG1 (TC 2.A.94) family.</text>
</comment>
<gene>
    <name type="ORF">SPCC1827.07c</name>
    <name type="ORF">SPCP1E11.01c</name>
</gene>
<sequence>MKFGKVIEGQSVAEWASAYFDYKKGKKIIAGIAKNPSEGLYGTSGILGETPEEAIVKRGQIHRFHPLFQEFLDQQANKVEEFFENLVSDARERMDLISDQVDIYEKLRAFKKGTLESGSVVLIQKQHSKLRQRLDSILNFSRLQPAYHIPARKSVPTDAYTPMVSYRKLKSKLKTTLLDFYDYLKLVSQYQHLNQQAFRKIVKKYDKTLHTDLQGFWVDYMSRYTFTDFSITTNWQLHVEDIYARLFTNHNKKLALEHLKSFRQKEHFSANSMRFGLLFGAGLPLAIEAACYYNATEQSSYLLQIWGGFFLVIFAFVLFDLDCYVWEKTRVNYMLIFEFNQRKSLNWRQHLEIVGAVFFIFSLFFFLCMRNFFPGFTIYFPALFLGVVGTFLIAPVIVPYWRMRRYLIIQLIRVFLSGLSTVHFQDFFFADQMVSLTYACGNISLFFCLYKRLWRQPQLCNSSHSPLLGFFTTLPGILRVFQCFRRYSDSLKSFPHLVNALKYIFNILAQMFLSLWRIHPGLKYRVLYTIFAGVNSLFSYTWDILMDWNLLVRKDGRWQFREHRILKQLWPYIIAMILNFIVRSSFIFYCIFPNHIQHSSGISFFVTLAEIMRRCMWNILRVEHEEIYNRENLRAARELKPLDFVKPHSDVFVSHQISSDKNYTDDEDSMDDQTDVDEAQFS</sequence>
<feature type="chain" id="PRO_0000116894" description="Protein SYG1 homolog">
    <location>
        <begin position="1"/>
        <end position="682"/>
    </location>
</feature>
<feature type="topological domain" description="Cytoplasmic" evidence="2">
    <location>
        <begin position="1"/>
        <end position="274"/>
    </location>
</feature>
<feature type="transmembrane region" description="Helical" evidence="2">
    <location>
        <begin position="275"/>
        <end position="295"/>
    </location>
</feature>
<feature type="topological domain" description="Extracellular" evidence="2">
    <location>
        <begin position="296"/>
        <end position="300"/>
    </location>
</feature>
<feature type="transmembrane region" description="Helical" evidence="2">
    <location>
        <begin position="301"/>
        <end position="321"/>
    </location>
</feature>
<feature type="topological domain" description="Cytoplasmic" evidence="2">
    <location>
        <begin position="322"/>
        <end position="348"/>
    </location>
</feature>
<feature type="transmembrane region" description="Helical" evidence="2">
    <location>
        <begin position="349"/>
        <end position="369"/>
    </location>
</feature>
<feature type="topological domain" description="Extracellular" evidence="2">
    <location>
        <begin position="370"/>
        <end position="377"/>
    </location>
</feature>
<feature type="transmembrane region" description="Helical" evidence="2">
    <location>
        <begin position="378"/>
        <end position="398"/>
    </location>
</feature>
<feature type="topological domain" description="Cytoplasmic" evidence="2">
    <location>
        <begin position="399"/>
        <end position="406"/>
    </location>
</feature>
<feature type="transmembrane region" description="Helical" evidence="2">
    <location>
        <begin position="407"/>
        <end position="424"/>
    </location>
</feature>
<feature type="topological domain" description="Extracellular" evidence="2">
    <location>
        <begin position="425"/>
        <end position="426"/>
    </location>
</feature>
<feature type="transmembrane region" description="Helical" evidence="2">
    <location>
        <begin position="427"/>
        <end position="447"/>
    </location>
</feature>
<feature type="topological domain" description="Cytoplasmic" evidence="2">
    <location>
        <begin position="448"/>
        <end position="525"/>
    </location>
</feature>
<feature type="transmembrane region" description="Helical" evidence="2">
    <location>
        <begin position="526"/>
        <end position="546"/>
    </location>
</feature>
<feature type="topological domain" description="Extracellular" evidence="2">
    <location>
        <begin position="547"/>
        <end position="571"/>
    </location>
</feature>
<feature type="transmembrane region" description="Helical" evidence="2">
    <location>
        <begin position="572"/>
        <end position="592"/>
    </location>
</feature>
<feature type="topological domain" description="Cytoplasmic" evidence="2">
    <location>
        <begin position="593"/>
        <end position="682"/>
    </location>
</feature>
<feature type="domain" description="SPX" evidence="4">
    <location>
        <begin position="1"/>
        <end position="219"/>
    </location>
</feature>
<feature type="domain" description="EXS" evidence="3">
    <location>
        <begin position="459"/>
        <end position="654"/>
    </location>
</feature>
<feature type="region of interest" description="Disordered" evidence="5">
    <location>
        <begin position="659"/>
        <end position="682"/>
    </location>
</feature>
<feature type="compositionally biased region" description="Acidic residues" evidence="5">
    <location>
        <begin position="665"/>
        <end position="682"/>
    </location>
</feature>